<proteinExistence type="evidence at protein level"/>
<evidence type="ECO:0000250" key="1">
    <source>
        <dbReference type="UniProtKB" id="Q12884"/>
    </source>
</evidence>
<evidence type="ECO:0000255" key="2"/>
<evidence type="ECO:0000255" key="3">
    <source>
        <dbReference type="PROSITE-ProRule" id="PRU10084"/>
    </source>
</evidence>
<evidence type="ECO:0000269" key="4">
    <source>
    </source>
</evidence>
<evidence type="ECO:0000303" key="5">
    <source>
    </source>
</evidence>
<evidence type="ECO:0000305" key="6"/>
<evidence type="ECO:0000312" key="7">
    <source>
        <dbReference type="EMBL" id="AAI40498.1"/>
    </source>
</evidence>
<evidence type="ECO:0000312" key="8">
    <source>
        <dbReference type="EMBL" id="DAAA02004416"/>
    </source>
</evidence>
<keyword id="KW-0037">Angiogenesis</keyword>
<keyword id="KW-0053">Apoptosis</keyword>
<keyword id="KW-0130">Cell adhesion</keyword>
<keyword id="KW-0965">Cell junction</keyword>
<keyword id="KW-1003">Cell membrane</keyword>
<keyword id="KW-0966">Cell projection</keyword>
<keyword id="KW-0165">Cleavage on pair of basic residues</keyword>
<keyword id="KW-0175">Coiled coil</keyword>
<keyword id="KW-0903">Direct protein sequencing</keyword>
<keyword id="KW-1015">Disulfide bond</keyword>
<keyword id="KW-0325">Glycoprotein</keyword>
<keyword id="KW-0378">Hydrolase</keyword>
<keyword id="KW-0472">Membrane</keyword>
<keyword id="KW-0645">Protease</keyword>
<keyword id="KW-1185">Reference proteome</keyword>
<keyword id="KW-0964">Secreted</keyword>
<keyword id="KW-0720">Serine protease</keyword>
<keyword id="KW-0735">Signal-anchor</keyword>
<keyword id="KW-0812">Transmembrane</keyword>
<keyword id="KW-1133">Transmembrane helix</keyword>
<protein>
    <recommendedName>
        <fullName evidence="1">Prolyl endopeptidase FAP</fullName>
        <ecNumber evidence="4">3.4.21.26</ecNumber>
    </recommendedName>
    <alternativeName>
        <fullName evidence="1">Dipeptidyl peptidase FAP</fullName>
        <ecNumber evidence="1">3.4.14.5</ecNumber>
    </alternativeName>
    <alternativeName>
        <fullName evidence="1">Fibroblast activation protein alpha</fullName>
        <shortName evidence="1">FAPalpha</shortName>
    </alternativeName>
    <alternativeName>
        <fullName evidence="1">Gelatine degradation protease FAP</fullName>
        <ecNumber evidence="1">3.4.21.-</ecNumber>
    </alternativeName>
    <alternativeName>
        <fullName evidence="1">Integral membrane serine protease</fullName>
    </alternativeName>
    <alternativeName>
        <fullName evidence="6">Post-proline cleaving enzyme</fullName>
    </alternativeName>
    <alternativeName>
        <fullName evidence="1">Serine integral membrane protease</fullName>
        <shortName evidence="1">SIMP</shortName>
    </alternativeName>
    <alternativeName>
        <fullName evidence="1">Surface-expressed protease</fullName>
        <shortName evidence="1">Seprase</shortName>
    </alternativeName>
    <alternativeName>
        <fullName evidence="5">Z-Pro-prolinal insensitive peptidase</fullName>
        <shortName evidence="5">ZIP</shortName>
    </alternativeName>
    <component>
        <recommendedName>
            <fullName evidence="1">Antiplasmin-cleaving enzyme FAP, soluble form</fullName>
            <shortName evidence="1">APCE</shortName>
            <ecNumber evidence="1">3.4.14.5</ecNumber>
            <ecNumber evidence="1">3.4.21.-</ecNumber>
            <ecNumber evidence="1">3.4.21.26</ecNumber>
        </recommendedName>
    </component>
</protein>
<comment type="function">
    <text evidence="1 4">Cell surface glycoprotein serine protease that participates in extracellular matrix degradation and involved in many cellular processes including tissue remodeling, fibrosis, wound healing, inflammation and tumor growth. Both plasma membrane and soluble forms exhibit post-proline cleaving endopeptidase activity, with a marked preference for Ala/Ser-Gly-Pro-Ser/Asn/Ala consensus sequences, on substrate such as alpha-2-antiplasmin SERPINF2 and SPRY2. Degrade also gelatin, heat-denatured type I collagen, but not native collagen type I and IV, vibronectin, tenascin, laminin, fibronectin, fibrin or casein. Also has dipeptidyl peptidase activity, exhibiting the ability to hydrolyze the prolyl bond two residues from the N-terminus of synthetic dipeptide substrates provided that the penultimate residue is proline, with a preference for Ala-Pro, Ile-Pro, Gly-Pro, Arg-Pro and Pro-Pro. Natural neuropeptide hormones for dipeptidyl peptidase are the neuropeptide Y (NPY), peptide YY (PYY), substance P (TAC1) and brain natriuretic peptide 32 (NPPB). The plasma membrane form, in association with either DPP4, PLAUR or integrins, is involved in the pericellular proteolysis of the extracellular matrix (ECM), and hence promotes cell adhesion, migration and invasion through the ECM. Plays a role in tissue remodeling during development and wound healing. Participates in the cell invasiveness towards the ECM in malignant melanoma cancers. Enhances tumor growth progression by increasing angiogenesis, collagen fiber degradation and apoptosis and by reducing antitumor response of the immune system. Promotes glioma cell invasion through the brain parenchyma by degrading the proteoglycan brevican. Acts as a tumor suppressor in melanocytic cells through regulation of cell proliferation and survival in a serine protease activity-independent manner.</text>
</comment>
<comment type="catalytic activity">
    <reaction evidence="1 3">
        <text>Release of an N-terminal dipeptide, Xaa-Yaa-|-Zaa-, from a polypeptide, preferentially when Yaa is Pro, provided Zaa is neither Pro nor hydroxyproline.</text>
        <dbReference type="EC" id="3.4.14.5"/>
    </reaction>
</comment>
<comment type="catalytic activity">
    <reaction evidence="4">
        <text>Hydrolysis of Pro-|-Xaa &gt;&gt; Ala-|-Xaa in oligopeptides.</text>
        <dbReference type="EC" id="3.4.21.26"/>
    </reaction>
</comment>
<comment type="activity regulation">
    <text evidence="1 4">Gelatinase activity is inhibited by serine-protease inhibitors, such as phenylmethylsulfonyl fluoride (PMSF), 4-(2-aminoethyl)-benzenesulfonyl fluoride hydrochloride (AEBSF), 4-amidino phenylsulfonyl fluoride (APSF) and diisopropyl fluorophosphate (DFP), N-ethylmaleimide (NEM) and phenylmethylsulfonyl fluoride (PMSF). Dipeptidyl peptidase activity is inhibited by 2,2'-azino-bis(3-ethylbenzthiazoline-6-sulfonic acid), diisopropylfluorophosphate (DFP). Prolyl endopeptidase activity is inhibited by the boronic acid peptide Ac-Gly-BoroPro, Ac-Gly-Pro-chloromethyl ketone and Thr-Ser-Gly-chloromethyl ketone.</text>
</comment>
<comment type="biophysicochemical properties">
    <kinetics>
        <KM evidence="4">0.27 mM for Gly-Pro (Prolyl endopeptidase activity)</KM>
        <KM evidence="4">0.206 mM for Gly-Pro-Phe-His (Prolyl endopeptidase activity)</KM>
    </kinetics>
</comment>
<comment type="subunit">
    <text evidence="1">Homodimer; homodimerization is required for activity of both plasma membrane and soluble forms. The monomer is inactive. Heterodimer with DPP4. Interacts with PLAUR; the interaction occurs at the cell surface of invadopodia membranes. Interacts with ITGB1. Interacts with ITGA3. Associates with integrin alpha-3/beta-1; the association occurs in a collagen-dependent manner at the cell surface of invadopodia membranes.</text>
</comment>
<comment type="subcellular location">
    <molecule>Prolyl endopeptidase FAP</molecule>
    <subcellularLocation>
        <location evidence="1">Cell surface</location>
    </subcellularLocation>
    <subcellularLocation>
        <location evidence="1">Cell membrane</location>
        <topology evidence="2">Single-pass type II membrane protein</topology>
    </subcellularLocation>
    <subcellularLocation>
        <location evidence="1">Cell projection</location>
        <location evidence="1">Lamellipodium membrane</location>
        <topology evidence="2">Single-pass type II membrane protein</topology>
    </subcellularLocation>
    <subcellularLocation>
        <location evidence="1">Cell projection</location>
        <location evidence="1">Invadopodium membrane</location>
        <topology evidence="2">Single-pass type II membrane protein</topology>
    </subcellularLocation>
    <subcellularLocation>
        <location evidence="1">Cell projection</location>
        <location evidence="1">Ruffle membrane</location>
        <topology evidence="2">Single-pass type II membrane protein</topology>
    </subcellularLocation>
    <subcellularLocation>
        <location evidence="1">Membrane</location>
        <topology evidence="2">Single-pass type II membrane protein</topology>
    </subcellularLocation>
    <text evidence="1">Localized on cell surface with lamellipodia and invadopodia membranes and on shed vesicles. Colocalized with DPP4 at invadopodia and lamellipodia membranes of migratory activated endothelial cells in collagenous matrix. Colocalized with DPP4 on endothelial cells of capillary-like microvessels but not large vessels within invasive breast ductal carcinoma. Anchored and enriched preferentially by integrin alpha-3/beta-1 at invadopodia, plasma membrane protrusions that correspond to sites of cell invasion, in a collagen-dependent manner. Localized at plasma and ruffle membranes in a collagen-independent manner. Colocalized with PLAUR preferentially at the cell surface of invadopodia membranes in a cytoskeleton-, integrin- and vitronectin-dependent manner. Concentrated at invadopodia membranes, specialized protrusions of the ventral plasma membrane in a fibrobectin-dependent manner. Colocalizes with extracellular components (ECM), such as collagen fibers and fibronectin.</text>
</comment>
<comment type="subcellular location">
    <molecule>Antiplasmin-cleaving enzyme FAP, soluble form</molecule>
    <subcellularLocation>
        <location evidence="1">Secreted</location>
    </subcellularLocation>
    <text evidence="1">Found in blood plasma and serum.</text>
</comment>
<comment type="PTM">
    <text evidence="1">N-glycosylated.</text>
</comment>
<comment type="PTM">
    <text evidence="1">The N-terminus may be blocked.</text>
</comment>
<comment type="similarity">
    <text evidence="6">Belongs to the peptidase S9B family.</text>
</comment>
<sequence>MKTWLKIVFGVATSAVLALLVMCIVLRPSRVHNSEESTTRALTLKDILNGTFSYKTFFPNWISGQEYLHQSTDNNVVFYNIETGESYTILSNTTMKSVNASNYGLSPDRQFAYLESDYSKLWRYSYTATYHIYDLTNGEFIRRNELPRPIQYLCWSPVGSKLAYVYQNNIYLKQRPEDPPFQITYNGKENKIFNGIPDWVYEEEMLATKYALWWSPNGKFLAYAEFNDTEIPVIAYSYYGDEQYPRTINIPYPKAGAKNPVVRIFIIDATYPEHIGPREVPVPAMIASSDYYFSWLTWVTDDRICLQWLKRIQNVSVLSTCDFREDWQTWNCPKTQEHIEESRTGWAGGFFVSTPVFSHDTISYYKIFSDKDGYKHIHYIRDTVENAIQITSGKWEAINIFRVTQDSLFYSSNEFEGYPGRRNIYRISIGSHSPSKKCITCHLRKKRCQYYTASFSDYAKYYALVCYGPGLPISTLHDGRTDQEIKILEDNKELENALKNIQLPKEEIKKLKVDDITLWYKMILPPQFDKSKKYPLLIQVYGGPCSQSVRSIFAVSWISYLASKEGIVIALVDGRGTAFQGDKLLYAVYRKLGVYEVEDQITAVRKFIEMGFIDEKRIAIWGWSYGGYVSSLALASGTGLFKCGIAVAPVSSWEYYASIYTERFMGLPTKDDNLKHYKNSTVMARAEYFRNVDYLLIHGTADDNVHFQNSAQIAKALVNAQVDFQAMWYSDQNHGLSGLSTKHLYTHMTHFLKQCFSLSD</sequence>
<reference key="1">
    <citation type="journal article" date="2009" name="Genome Biol.">
        <title>A whole-genome assembly of the domestic cow, Bos taurus.</title>
        <authorList>
            <person name="Zimin A.V."/>
            <person name="Delcher A.L."/>
            <person name="Florea L."/>
            <person name="Kelley D.R."/>
            <person name="Schatz M.C."/>
            <person name="Puiu D."/>
            <person name="Hanrahan F."/>
            <person name="Pertea G."/>
            <person name="Van Tassell C.P."/>
            <person name="Sonstegard T.S."/>
            <person name="Marcais G."/>
            <person name="Roberts M."/>
            <person name="Subramanian P."/>
            <person name="Yorke J.A."/>
            <person name="Salzberg S.L."/>
        </authorList>
    </citation>
    <scope>NUCLEOTIDE SEQUENCE [LARGE SCALE GENOMIC DNA]</scope>
    <source>
        <strain evidence="8">Hereford</strain>
    </source>
</reference>
<reference key="2">
    <citation type="submission" date="2007-04" db="EMBL/GenBank/DDBJ databases">
        <authorList>
            <consortium name="NIH - Mammalian Gene Collection (MGC) project"/>
        </authorList>
    </citation>
    <scope>NUCLEOTIDE SEQUENCE [LARGE SCALE MRNA]</scope>
    <source>
        <strain evidence="7">Hereford</strain>
        <tissue>Ascending colon</tissue>
    </source>
</reference>
<reference key="3">
    <citation type="journal article" date="2004" name="Int. J. Biochem. Cell Biol.">
        <title>Purification, identification and characterisation of seprase from bovine serum.</title>
        <authorList>
            <person name="Collins P.J."/>
            <person name="McMahon G."/>
            <person name="O'Brien P."/>
            <person name="O'Connor B."/>
        </authorList>
    </citation>
    <scope>PARTIAL PROTEIN SEQUENCE</scope>
    <scope>FUNCTION</scope>
    <scope>CATALYTIC ACTIVITY</scope>
    <scope>BIOPHYSICOCHEMICAL PROPERTIES</scope>
    <scope>ACTIVITY REGULATION</scope>
</reference>
<name>SEPR_BOVIN</name>
<dbReference type="EC" id="3.4.21.26" evidence="4 1"/>
<dbReference type="EC" id="3.4.14.5" evidence="1"/>
<dbReference type="EC" id="3.4.21.-" evidence="1"/>
<dbReference type="EMBL" id="DAAA02004416">
    <property type="status" value="NOT_ANNOTATED_CDS"/>
    <property type="molecule type" value="Genomic_DNA"/>
</dbReference>
<dbReference type="EMBL" id="BC140497">
    <property type="protein sequence ID" value="AAI40498.1"/>
    <property type="molecule type" value="mRNA"/>
</dbReference>
<dbReference type="RefSeq" id="NP_001091470.1">
    <property type="nucleotide sequence ID" value="NM_001098001.1"/>
</dbReference>
<dbReference type="SMR" id="A5D7B7"/>
<dbReference type="FunCoup" id="A5D7B7">
    <property type="interactions" value="97"/>
</dbReference>
<dbReference type="STRING" id="9913.ENSBTAP00000010702"/>
<dbReference type="BindingDB" id="A5D7B7"/>
<dbReference type="ChEMBL" id="CHEMBL3734641"/>
<dbReference type="ESTHER" id="bovin-a5d7b7">
    <property type="family name" value="DPP4N_Peptidase_S9"/>
</dbReference>
<dbReference type="MEROPS" id="S09.007"/>
<dbReference type="GlyCosmos" id="A5D7B7">
    <property type="glycosylation" value="6 sites, No reported glycans"/>
</dbReference>
<dbReference type="GlyGen" id="A5D7B7">
    <property type="glycosylation" value="6 sites"/>
</dbReference>
<dbReference type="PaxDb" id="9913-ENSBTAP00000010702"/>
<dbReference type="Ensembl" id="ENSBTAT00000010702.5">
    <property type="protein sequence ID" value="ENSBTAP00000010702.4"/>
    <property type="gene ID" value="ENSBTAG00000008140.6"/>
</dbReference>
<dbReference type="GeneID" id="508882"/>
<dbReference type="KEGG" id="bta:508882"/>
<dbReference type="CTD" id="2191"/>
<dbReference type="VEuPathDB" id="HostDB:ENSBTAG00000008140"/>
<dbReference type="VGNC" id="VGNC:28862">
    <property type="gene designation" value="FAP"/>
</dbReference>
<dbReference type="eggNOG" id="KOG2100">
    <property type="taxonomic scope" value="Eukaryota"/>
</dbReference>
<dbReference type="GeneTree" id="ENSGT00940000160454"/>
<dbReference type="HOGENOM" id="CLU_006105_4_3_1"/>
<dbReference type="InParanoid" id="A5D7B7"/>
<dbReference type="OMA" id="MRTPQEN"/>
<dbReference type="OrthoDB" id="16520at2759"/>
<dbReference type="TreeFam" id="TF313309"/>
<dbReference type="SABIO-RK" id="A5D7B7"/>
<dbReference type="Proteomes" id="UP000009136">
    <property type="component" value="Chromosome 2"/>
</dbReference>
<dbReference type="Bgee" id="ENSBTAG00000008140">
    <property type="expression patterns" value="Expressed in uterine horn and 84 other cell types or tissues"/>
</dbReference>
<dbReference type="GO" id="GO:0070161">
    <property type="term" value="C:anchoring junction"/>
    <property type="evidence" value="ECO:0007669"/>
    <property type="project" value="UniProtKB-KW"/>
</dbReference>
<dbReference type="GO" id="GO:0045177">
    <property type="term" value="C:apical part of cell"/>
    <property type="evidence" value="ECO:0007669"/>
    <property type="project" value="Ensembl"/>
</dbReference>
<dbReference type="GO" id="GO:0045178">
    <property type="term" value="C:basal part of cell"/>
    <property type="evidence" value="ECO:0007669"/>
    <property type="project" value="Ensembl"/>
</dbReference>
<dbReference type="GO" id="GO:0009986">
    <property type="term" value="C:cell surface"/>
    <property type="evidence" value="ECO:0007669"/>
    <property type="project" value="UniProtKB-SubCell"/>
</dbReference>
<dbReference type="GO" id="GO:0005615">
    <property type="term" value="C:extracellular space"/>
    <property type="evidence" value="ECO:0007669"/>
    <property type="project" value="Ensembl"/>
</dbReference>
<dbReference type="GO" id="GO:0031258">
    <property type="term" value="C:lamellipodium membrane"/>
    <property type="evidence" value="ECO:0007669"/>
    <property type="project" value="UniProtKB-SubCell"/>
</dbReference>
<dbReference type="GO" id="GO:1905368">
    <property type="term" value="C:peptidase complex"/>
    <property type="evidence" value="ECO:0007669"/>
    <property type="project" value="Ensembl"/>
</dbReference>
<dbReference type="GO" id="GO:0005886">
    <property type="term" value="C:plasma membrane"/>
    <property type="evidence" value="ECO:0000318"/>
    <property type="project" value="GO_Central"/>
</dbReference>
<dbReference type="GO" id="GO:0032587">
    <property type="term" value="C:ruffle membrane"/>
    <property type="evidence" value="ECO:0007669"/>
    <property type="project" value="UniProtKB-SubCell"/>
</dbReference>
<dbReference type="GO" id="GO:0008239">
    <property type="term" value="F:dipeptidyl-peptidase activity"/>
    <property type="evidence" value="ECO:0000318"/>
    <property type="project" value="GO_Central"/>
</dbReference>
<dbReference type="GO" id="GO:0005178">
    <property type="term" value="F:integrin binding"/>
    <property type="evidence" value="ECO:0007669"/>
    <property type="project" value="Ensembl"/>
</dbReference>
<dbReference type="GO" id="GO:0002020">
    <property type="term" value="F:protease binding"/>
    <property type="evidence" value="ECO:0007669"/>
    <property type="project" value="Ensembl"/>
</dbReference>
<dbReference type="GO" id="GO:0042803">
    <property type="term" value="F:protein homodimerization activity"/>
    <property type="evidence" value="ECO:0007669"/>
    <property type="project" value="Ensembl"/>
</dbReference>
<dbReference type="GO" id="GO:0004252">
    <property type="term" value="F:serine-type endopeptidase activity"/>
    <property type="evidence" value="ECO:0007669"/>
    <property type="project" value="UniProtKB-EC"/>
</dbReference>
<dbReference type="GO" id="GO:0001525">
    <property type="term" value="P:angiogenesis"/>
    <property type="evidence" value="ECO:0007669"/>
    <property type="project" value="UniProtKB-KW"/>
</dbReference>
<dbReference type="GO" id="GO:0007155">
    <property type="term" value="P:cell adhesion"/>
    <property type="evidence" value="ECO:0007669"/>
    <property type="project" value="UniProtKB-KW"/>
</dbReference>
<dbReference type="GO" id="GO:0043542">
    <property type="term" value="P:endothelial cell migration"/>
    <property type="evidence" value="ECO:0007669"/>
    <property type="project" value="Ensembl"/>
</dbReference>
<dbReference type="GO" id="GO:1902362">
    <property type="term" value="P:melanocyte apoptotic process"/>
    <property type="evidence" value="ECO:0007669"/>
    <property type="project" value="Ensembl"/>
</dbReference>
<dbReference type="GO" id="GO:0097325">
    <property type="term" value="P:melanocyte proliferation"/>
    <property type="evidence" value="ECO:0007669"/>
    <property type="project" value="Ensembl"/>
</dbReference>
<dbReference type="GO" id="GO:0060244">
    <property type="term" value="P:negative regulation of cell proliferation involved in contact inhibition"/>
    <property type="evidence" value="ECO:0007669"/>
    <property type="project" value="Ensembl"/>
</dbReference>
<dbReference type="GO" id="GO:0010716">
    <property type="term" value="P:negative regulation of extracellular matrix disassembly"/>
    <property type="evidence" value="ECO:0007669"/>
    <property type="project" value="Ensembl"/>
</dbReference>
<dbReference type="GO" id="GO:1900119">
    <property type="term" value="P:positive regulation of execution phase of apoptosis"/>
    <property type="evidence" value="ECO:0007669"/>
    <property type="project" value="Ensembl"/>
</dbReference>
<dbReference type="GO" id="GO:0006508">
    <property type="term" value="P:proteolysis"/>
    <property type="evidence" value="ECO:0000318"/>
    <property type="project" value="GO_Central"/>
</dbReference>
<dbReference type="GO" id="GO:0051603">
    <property type="term" value="P:proteolysis involved in protein catabolic process"/>
    <property type="evidence" value="ECO:0007669"/>
    <property type="project" value="Ensembl"/>
</dbReference>
<dbReference type="GO" id="GO:0051726">
    <property type="term" value="P:regulation of cell cycle"/>
    <property type="evidence" value="ECO:0007669"/>
    <property type="project" value="Ensembl"/>
</dbReference>
<dbReference type="GO" id="GO:0010710">
    <property type="term" value="P:regulation of collagen catabolic process"/>
    <property type="evidence" value="ECO:0007669"/>
    <property type="project" value="Ensembl"/>
</dbReference>
<dbReference type="FunFam" id="2.140.10.30:FF:000001">
    <property type="entry name" value="Dipeptidyl peptidase 4"/>
    <property type="match status" value="1"/>
</dbReference>
<dbReference type="FunFam" id="3.40.50.1820:FF:000003">
    <property type="entry name" value="Dipeptidyl peptidase 4"/>
    <property type="match status" value="1"/>
</dbReference>
<dbReference type="Gene3D" id="3.40.50.1820">
    <property type="entry name" value="alpha/beta hydrolase"/>
    <property type="match status" value="1"/>
</dbReference>
<dbReference type="Gene3D" id="2.140.10.30">
    <property type="entry name" value="Dipeptidylpeptidase IV, N-terminal domain"/>
    <property type="match status" value="1"/>
</dbReference>
<dbReference type="InterPro" id="IPR029058">
    <property type="entry name" value="AB_hydrolase_fold"/>
</dbReference>
<dbReference type="InterPro" id="IPR002471">
    <property type="entry name" value="Pept_S9_AS"/>
</dbReference>
<dbReference type="InterPro" id="IPR001375">
    <property type="entry name" value="Peptidase_S9_cat"/>
</dbReference>
<dbReference type="InterPro" id="IPR002469">
    <property type="entry name" value="Peptidase_S9B_N"/>
</dbReference>
<dbReference type="InterPro" id="IPR050278">
    <property type="entry name" value="Serine_Prot_S9B/DPPIV"/>
</dbReference>
<dbReference type="PANTHER" id="PTHR11731:SF136">
    <property type="entry name" value="PROLYL ENDOPEPTIDASE FAP"/>
    <property type="match status" value="1"/>
</dbReference>
<dbReference type="PANTHER" id="PTHR11731">
    <property type="entry name" value="PROTEASE FAMILY S9B,C DIPEPTIDYL-PEPTIDASE IV-RELATED"/>
    <property type="match status" value="1"/>
</dbReference>
<dbReference type="Pfam" id="PF00930">
    <property type="entry name" value="DPPIV_N"/>
    <property type="match status" value="1"/>
</dbReference>
<dbReference type="Pfam" id="PF00326">
    <property type="entry name" value="Peptidase_S9"/>
    <property type="match status" value="1"/>
</dbReference>
<dbReference type="SUPFAM" id="SSF53474">
    <property type="entry name" value="alpha/beta-Hydrolases"/>
    <property type="match status" value="1"/>
</dbReference>
<dbReference type="SUPFAM" id="SSF82171">
    <property type="entry name" value="DPP6 N-terminal domain-like"/>
    <property type="match status" value="1"/>
</dbReference>
<feature type="chain" id="PRO_0000430645" description="Prolyl endopeptidase FAP" evidence="1">
    <location>
        <begin position="1"/>
        <end position="760"/>
    </location>
</feature>
<feature type="chain" id="PRO_0000430646" description="Antiplasmin-cleaving enzyme FAP, soluble form" evidence="1">
    <location>
        <begin position="24"/>
        <end position="760"/>
    </location>
</feature>
<feature type="topological domain" description="Cytoplasmic" evidence="1 2">
    <location>
        <begin position="1"/>
        <end position="4"/>
    </location>
</feature>
<feature type="transmembrane region" description="Helical; Signal-anchor for type II membrane protein" evidence="2">
    <location>
        <begin position="5"/>
        <end position="25"/>
    </location>
</feature>
<feature type="topological domain" description="Extracellular" evidence="1 2">
    <location>
        <begin position="26"/>
        <end position="760"/>
    </location>
</feature>
<feature type="coiled-coil region" evidence="2">
    <location>
        <begin position="481"/>
        <end position="512"/>
    </location>
</feature>
<feature type="active site" description="Charge relay system" evidence="1 3">
    <location>
        <position position="624"/>
    </location>
</feature>
<feature type="active site" description="Charge relay system" evidence="1">
    <location>
        <position position="702"/>
    </location>
</feature>
<feature type="active site" description="Charge relay system" evidence="1">
    <location>
        <position position="734"/>
    </location>
</feature>
<feature type="binding site" evidence="1">
    <location>
        <position position="203"/>
    </location>
    <ligand>
        <name>substrate</name>
    </ligand>
</feature>
<feature type="binding site" evidence="1">
    <location>
        <position position="204"/>
    </location>
    <ligand>
        <name>substrate</name>
    </ligand>
</feature>
<feature type="site" description="Cleavage" evidence="1">
    <location>
        <begin position="23"/>
        <end position="24"/>
    </location>
</feature>
<feature type="glycosylation site" description="N-linked (GlcNAc...) asparagine" evidence="1 3">
    <location>
        <position position="49"/>
    </location>
</feature>
<feature type="glycosylation site" description="N-linked (GlcNAc...) asparagine" evidence="1 3">
    <location>
        <position position="92"/>
    </location>
</feature>
<feature type="glycosylation site" description="N-linked (GlcNAc...) asparagine" evidence="1 3">
    <location>
        <position position="99"/>
    </location>
</feature>
<feature type="glycosylation site" description="N-linked (GlcNAc...) asparagine" evidence="1 3">
    <location>
        <position position="227"/>
    </location>
</feature>
<feature type="glycosylation site" description="N-linked (GlcNAc...) asparagine" evidence="1 3">
    <location>
        <position position="314"/>
    </location>
</feature>
<feature type="glycosylation site" description="N-linked (GlcNAc...) asparagine" evidence="3">
    <location>
        <position position="679"/>
    </location>
</feature>
<feature type="disulfide bond" evidence="1">
    <location>
        <begin position="321"/>
        <end position="332"/>
    </location>
</feature>
<feature type="disulfide bond" evidence="1">
    <location>
        <begin position="438"/>
        <end position="441"/>
    </location>
</feature>
<feature type="disulfide bond" evidence="1">
    <location>
        <begin position="448"/>
        <end position="466"/>
    </location>
</feature>
<feature type="disulfide bond" evidence="1">
    <location>
        <begin position="643"/>
        <end position="755"/>
    </location>
</feature>
<gene>
    <name evidence="1 7" type="primary">FAP</name>
</gene>
<organism>
    <name type="scientific">Bos taurus</name>
    <name type="common">Bovine</name>
    <dbReference type="NCBI Taxonomy" id="9913"/>
    <lineage>
        <taxon>Eukaryota</taxon>
        <taxon>Metazoa</taxon>
        <taxon>Chordata</taxon>
        <taxon>Craniata</taxon>
        <taxon>Vertebrata</taxon>
        <taxon>Euteleostomi</taxon>
        <taxon>Mammalia</taxon>
        <taxon>Eutheria</taxon>
        <taxon>Laurasiatheria</taxon>
        <taxon>Artiodactyla</taxon>
        <taxon>Ruminantia</taxon>
        <taxon>Pecora</taxon>
        <taxon>Bovidae</taxon>
        <taxon>Bovinae</taxon>
        <taxon>Bos</taxon>
    </lineage>
</organism>
<accession>A5D7B7</accession>